<feature type="initiator methionine" description="Removed" evidence="7">
    <location>
        <position position="1"/>
    </location>
</feature>
<feature type="chain" id="PRO_0000143960" description="Protein S100-A1">
    <location>
        <begin position="2"/>
        <end position="94"/>
    </location>
</feature>
<feature type="domain" description="EF-hand 1" evidence="8">
    <location>
        <begin position="13"/>
        <end position="48"/>
    </location>
</feature>
<feature type="domain" description="EF-hand 2" evidence="4">
    <location>
        <begin position="50"/>
        <end position="85"/>
    </location>
</feature>
<feature type="binding site" evidence="2">
    <location>
        <position position="28"/>
    </location>
    <ligand>
        <name>Ca(2+)</name>
        <dbReference type="ChEBI" id="CHEBI:29108"/>
        <label>1</label>
        <note>low affinity</note>
    </ligand>
</feature>
<feature type="binding site" evidence="2">
    <location>
        <position position="33"/>
    </location>
    <ligand>
        <name>Ca(2+)</name>
        <dbReference type="ChEBI" id="CHEBI:29108"/>
        <label>1</label>
        <note>low affinity</note>
    </ligand>
</feature>
<feature type="binding site" evidence="4">
    <location>
        <position position="63"/>
    </location>
    <ligand>
        <name>Ca(2+)</name>
        <dbReference type="ChEBI" id="CHEBI:29108"/>
        <label>2</label>
        <note>high affinity</note>
    </ligand>
</feature>
<feature type="binding site" evidence="4">
    <location>
        <position position="65"/>
    </location>
    <ligand>
        <name>Ca(2+)</name>
        <dbReference type="ChEBI" id="CHEBI:29108"/>
        <label>2</label>
        <note>high affinity</note>
    </ligand>
</feature>
<feature type="binding site" evidence="4">
    <location>
        <position position="67"/>
    </location>
    <ligand>
        <name>Ca(2+)</name>
        <dbReference type="ChEBI" id="CHEBI:29108"/>
        <label>2</label>
        <note>high affinity</note>
    </ligand>
</feature>
<feature type="binding site" evidence="4">
    <location>
        <position position="69"/>
    </location>
    <ligand>
        <name>Ca(2+)</name>
        <dbReference type="ChEBI" id="CHEBI:29108"/>
        <label>2</label>
        <note>high affinity</note>
    </ligand>
</feature>
<feature type="binding site" evidence="4">
    <location>
        <position position="74"/>
    </location>
    <ligand>
        <name>Ca(2+)</name>
        <dbReference type="ChEBI" id="CHEBI:29108"/>
        <label>2</label>
        <note>high affinity</note>
    </ligand>
</feature>
<feature type="modified residue" description="Blocked amino end (Gly)" evidence="7">
    <location>
        <position position="2"/>
    </location>
</feature>
<feature type="modified residue" description="S-nitrosocysteine" evidence="1">
    <location>
        <position position="86"/>
    </location>
</feature>
<feature type="sequence conflict" description="In Ref. 3; AA sequence." evidence="8" ref="3">
    <original>N</original>
    <variation>D</variation>
    <location>
        <position position="65"/>
    </location>
</feature>
<feature type="helix" evidence="9">
    <location>
        <begin position="4"/>
        <end position="18"/>
    </location>
</feature>
<feature type="helix" evidence="9">
    <location>
        <begin position="31"/>
        <end position="42"/>
    </location>
</feature>
<feature type="turn" evidence="9">
    <location>
        <begin position="43"/>
        <end position="45"/>
    </location>
</feature>
<feature type="helix" evidence="9">
    <location>
        <begin position="46"/>
        <end position="49"/>
    </location>
</feature>
<feature type="helix" evidence="9">
    <location>
        <begin position="54"/>
        <end position="64"/>
    </location>
</feature>
<feature type="helix" evidence="9">
    <location>
        <begin position="75"/>
        <end position="90"/>
    </location>
</feature>
<evidence type="ECO:0000250" key="1">
    <source>
        <dbReference type="UniProtKB" id="P23297"/>
    </source>
</evidence>
<evidence type="ECO:0000250" key="2">
    <source>
        <dbReference type="UniProtKB" id="P35467"/>
    </source>
</evidence>
<evidence type="ECO:0000250" key="3">
    <source>
        <dbReference type="UniProtKB" id="P56565"/>
    </source>
</evidence>
<evidence type="ECO:0000255" key="4">
    <source>
        <dbReference type="PROSITE-ProRule" id="PRU00448"/>
    </source>
</evidence>
<evidence type="ECO:0000269" key="5">
    <source>
    </source>
</evidence>
<evidence type="ECO:0000269" key="6">
    <source>
    </source>
</evidence>
<evidence type="ECO:0000269" key="7">
    <source>
    </source>
</evidence>
<evidence type="ECO:0000305" key="8"/>
<evidence type="ECO:0007829" key="9">
    <source>
        <dbReference type="PDB" id="2JPT"/>
    </source>
</evidence>
<proteinExistence type="evidence at protein level"/>
<gene>
    <name type="primary">S100A1</name>
</gene>
<organism>
    <name type="scientific">Bos taurus</name>
    <name type="common">Bovine</name>
    <dbReference type="NCBI Taxonomy" id="9913"/>
    <lineage>
        <taxon>Eukaryota</taxon>
        <taxon>Metazoa</taxon>
        <taxon>Chordata</taxon>
        <taxon>Craniata</taxon>
        <taxon>Vertebrata</taxon>
        <taxon>Euteleostomi</taxon>
        <taxon>Mammalia</taxon>
        <taxon>Eutheria</taxon>
        <taxon>Laurasiatheria</taxon>
        <taxon>Artiodactyla</taxon>
        <taxon>Ruminantia</taxon>
        <taxon>Pecora</taxon>
        <taxon>Bovidae</taxon>
        <taxon>Bovinae</taxon>
        <taxon>Bos</taxon>
    </lineage>
</organism>
<reference key="1">
    <citation type="journal article" date="1986" name="FEBS Lett.">
        <title>Molecular cloning of cDNA of S100 alpha subunit mRNA.</title>
        <authorList>
            <person name="Kuwano R."/>
            <person name="Maeda T."/>
            <person name="Usui H."/>
            <person name="Araki K."/>
            <person name="Yamakuni T."/>
            <person name="Ohshima Y."/>
            <person name="Kurihara T."/>
            <person name="Takahashi Y."/>
        </authorList>
    </citation>
    <scope>NUCLEOTIDE SEQUENCE [MRNA]</scope>
    <scope>TISSUE SPECIFICITY</scope>
</reference>
<reference key="2">
    <citation type="submission" date="2007-06" db="EMBL/GenBank/DDBJ databases">
        <authorList>
            <consortium name="NIH - Mammalian Gene Collection (MGC) project"/>
        </authorList>
    </citation>
    <scope>NUCLEOTIDE SEQUENCE [LARGE SCALE MRNA]</scope>
    <source>
        <strain>Hereford</strain>
        <tissue>Fetal cerebellum</tissue>
        <tissue>Hypothalamus</tissue>
    </source>
</reference>
<reference key="3">
    <citation type="journal article" date="1981" name="Eur. J. Biochem.">
        <title>The amino-acid sequence of the alpha subunit in bovine brain S-100a protein.</title>
        <authorList>
            <person name="Isobe T."/>
            <person name="Okuyama T."/>
        </authorList>
    </citation>
    <scope>PROTEIN SEQUENCE OF 2-94</scope>
</reference>
<reference key="4">
    <citation type="journal article" date="1983" name="Biochemistry">
        <title>Ions binding to S100 proteins: structural changes induced by calcium and zinc on S100a and S100b proteins.</title>
        <authorList>
            <person name="Baudier J."/>
            <person name="Gerard D."/>
        </authorList>
    </citation>
    <scope>METAL ION-BINDING PROPERTIES</scope>
</reference>
<reference key="5">
    <citation type="journal article" date="2008" name="Biochemistry">
        <title>Structural and motional changes induced in apo-S100A1 protein by the disulfide formation between its Cys 85 residue and beta-mercaptoethanol.</title>
        <authorList>
            <person name="Zhukov I."/>
            <person name="Ejchart A."/>
            <person name="Bierzynski A."/>
        </authorList>
    </citation>
    <scope>STRUCTURE BY NMR OF 2-94</scope>
</reference>
<dbReference type="EMBL" id="BC141991">
    <property type="protein sequence ID" value="AAI41992.1"/>
    <property type="molecule type" value="mRNA"/>
</dbReference>
<dbReference type="EMBL" id="BC148019">
    <property type="protein sequence ID" value="AAI48020.1"/>
    <property type="molecule type" value="mRNA"/>
</dbReference>
<dbReference type="PIR" id="A24156">
    <property type="entry name" value="BCBOIA"/>
</dbReference>
<dbReference type="RefSeq" id="NP_001092512.1">
    <property type="nucleotide sequence ID" value="NM_001099042.2"/>
</dbReference>
<dbReference type="RefSeq" id="XP_005203778.1">
    <property type="nucleotide sequence ID" value="XM_005203721.5"/>
</dbReference>
<dbReference type="RefSeq" id="XP_010801217.1">
    <property type="nucleotide sequence ID" value="XM_010802915.2"/>
</dbReference>
<dbReference type="PDB" id="2JPT">
    <property type="method" value="NMR"/>
    <property type="chains" value="A/B=2-94"/>
</dbReference>
<dbReference type="PDBsum" id="2JPT"/>
<dbReference type="BMRB" id="P02639"/>
<dbReference type="SMR" id="P02639"/>
<dbReference type="FunCoup" id="P02639">
    <property type="interactions" value="70"/>
</dbReference>
<dbReference type="IntAct" id="P02639">
    <property type="interactions" value="6"/>
</dbReference>
<dbReference type="STRING" id="9913.ENSBTAP00000006806"/>
<dbReference type="PaxDb" id="9913-ENSBTAP00000044226"/>
<dbReference type="Ensembl" id="ENSBTAT00000006806.6">
    <property type="protein sequence ID" value="ENSBTAP00000006806.4"/>
    <property type="gene ID" value="ENSBTAG00000005163.7"/>
</dbReference>
<dbReference type="GeneID" id="528735"/>
<dbReference type="KEGG" id="bta:528735"/>
<dbReference type="CTD" id="6271"/>
<dbReference type="VEuPathDB" id="HostDB:ENSBTAG00000005163"/>
<dbReference type="VGNC" id="VGNC:34236">
    <property type="gene designation" value="S100A1"/>
</dbReference>
<dbReference type="eggNOG" id="ENOG502SSF0">
    <property type="taxonomic scope" value="Eukaryota"/>
</dbReference>
<dbReference type="GeneTree" id="ENSGT00940000160475"/>
<dbReference type="HOGENOM" id="CLU_138624_2_1_1"/>
<dbReference type="InParanoid" id="P02639"/>
<dbReference type="OMA" id="ACNSFFW"/>
<dbReference type="OrthoDB" id="26525at2759"/>
<dbReference type="Reactome" id="R-BTA-5686938">
    <property type="pathway name" value="Regulation of TLR by endogenous ligand"/>
</dbReference>
<dbReference type="EvolutionaryTrace" id="P02639"/>
<dbReference type="Proteomes" id="UP000009136">
    <property type="component" value="Chromosome 3"/>
</dbReference>
<dbReference type="Bgee" id="ENSBTAG00000005163">
    <property type="expression patterns" value="Expressed in pons and 102 other cell types or tissues"/>
</dbReference>
<dbReference type="GO" id="GO:0005737">
    <property type="term" value="C:cytoplasm"/>
    <property type="evidence" value="ECO:0000318"/>
    <property type="project" value="GO_Central"/>
</dbReference>
<dbReference type="GO" id="GO:0005829">
    <property type="term" value="C:cytosol"/>
    <property type="evidence" value="ECO:0007669"/>
    <property type="project" value="Ensembl"/>
</dbReference>
<dbReference type="GO" id="GO:0005794">
    <property type="term" value="C:Golgi apparatus"/>
    <property type="evidence" value="ECO:0007669"/>
    <property type="project" value="Ensembl"/>
</dbReference>
<dbReference type="GO" id="GO:0005739">
    <property type="term" value="C:mitochondrion"/>
    <property type="evidence" value="ECO:0007669"/>
    <property type="project" value="UniProtKB-SubCell"/>
</dbReference>
<dbReference type="GO" id="GO:0005654">
    <property type="term" value="C:nucleoplasm"/>
    <property type="evidence" value="ECO:0007669"/>
    <property type="project" value="Ensembl"/>
</dbReference>
<dbReference type="GO" id="GO:0016529">
    <property type="term" value="C:sarcoplasmic reticulum"/>
    <property type="evidence" value="ECO:0000318"/>
    <property type="project" value="GO_Central"/>
</dbReference>
<dbReference type="GO" id="GO:0051117">
    <property type="term" value="F:ATPase binding"/>
    <property type="evidence" value="ECO:0007669"/>
    <property type="project" value="Ensembl"/>
</dbReference>
<dbReference type="GO" id="GO:0005509">
    <property type="term" value="F:calcium ion binding"/>
    <property type="evidence" value="ECO:0000318"/>
    <property type="project" value="GO_Central"/>
</dbReference>
<dbReference type="GO" id="GO:0048306">
    <property type="term" value="F:calcium-dependent protein binding"/>
    <property type="evidence" value="ECO:0000318"/>
    <property type="project" value="GO_Central"/>
</dbReference>
<dbReference type="GO" id="GO:0042803">
    <property type="term" value="F:protein homodimerization activity"/>
    <property type="evidence" value="ECO:0007669"/>
    <property type="project" value="Ensembl"/>
</dbReference>
<dbReference type="GO" id="GO:0044548">
    <property type="term" value="F:S100 protein binding"/>
    <property type="evidence" value="ECO:0000318"/>
    <property type="project" value="GO_Central"/>
</dbReference>
<dbReference type="GO" id="GO:1903672">
    <property type="term" value="P:positive regulation of sprouting angiogenesis"/>
    <property type="evidence" value="ECO:0007669"/>
    <property type="project" value="Ensembl"/>
</dbReference>
<dbReference type="GO" id="GO:0008016">
    <property type="term" value="P:regulation of heart contraction"/>
    <property type="evidence" value="ECO:0007669"/>
    <property type="project" value="InterPro"/>
</dbReference>
<dbReference type="CDD" id="cd05025">
    <property type="entry name" value="S-100A1"/>
    <property type="match status" value="1"/>
</dbReference>
<dbReference type="FunFam" id="1.10.238.10:FF:000044">
    <property type="entry name" value="Protein S100"/>
    <property type="match status" value="1"/>
</dbReference>
<dbReference type="Gene3D" id="1.10.238.10">
    <property type="entry name" value="EF-hand"/>
    <property type="match status" value="1"/>
</dbReference>
<dbReference type="InterPro" id="IPR011992">
    <property type="entry name" value="EF-hand-dom_pair"/>
</dbReference>
<dbReference type="InterPro" id="IPR018247">
    <property type="entry name" value="EF_Hand_1_Ca_BS"/>
</dbReference>
<dbReference type="InterPro" id="IPR002048">
    <property type="entry name" value="EF_hand_dom"/>
</dbReference>
<dbReference type="InterPro" id="IPR028486">
    <property type="entry name" value="S100-A1"/>
</dbReference>
<dbReference type="InterPro" id="IPR001751">
    <property type="entry name" value="S100/CaBP7/8-like_CS"/>
</dbReference>
<dbReference type="InterPro" id="IPR013787">
    <property type="entry name" value="S100_Ca-bd_sub"/>
</dbReference>
<dbReference type="PANTHER" id="PTHR11639:SF134">
    <property type="entry name" value="PROTEIN S100-A1-RELATED"/>
    <property type="match status" value="1"/>
</dbReference>
<dbReference type="PANTHER" id="PTHR11639">
    <property type="entry name" value="S100 CALCIUM-BINDING PROTEIN"/>
    <property type="match status" value="1"/>
</dbReference>
<dbReference type="Pfam" id="PF00036">
    <property type="entry name" value="EF-hand_1"/>
    <property type="match status" value="1"/>
</dbReference>
<dbReference type="Pfam" id="PF01023">
    <property type="entry name" value="S_100"/>
    <property type="match status" value="1"/>
</dbReference>
<dbReference type="SMART" id="SM00054">
    <property type="entry name" value="EFh"/>
    <property type="match status" value="1"/>
</dbReference>
<dbReference type="SMART" id="SM01394">
    <property type="entry name" value="S_100"/>
    <property type="match status" value="1"/>
</dbReference>
<dbReference type="SUPFAM" id="SSF47473">
    <property type="entry name" value="EF-hand"/>
    <property type="match status" value="1"/>
</dbReference>
<dbReference type="PROSITE" id="PS00018">
    <property type="entry name" value="EF_HAND_1"/>
    <property type="match status" value="1"/>
</dbReference>
<dbReference type="PROSITE" id="PS50222">
    <property type="entry name" value="EF_HAND_2"/>
    <property type="match status" value="1"/>
</dbReference>
<dbReference type="PROSITE" id="PS00303">
    <property type="entry name" value="S100_CABP"/>
    <property type="match status" value="1"/>
</dbReference>
<accession>P02639</accession>
<accession>A5PJ73</accession>
<sequence length="94" mass="10518">MGSELETAMETLINVFHAHSGKEGDKYKLSKKELKELLQTELSGFLDAQKDADAVDKVMKELDENGDGEVDFQEYVVLVAALTVACNNFFWENS</sequence>
<protein>
    <recommendedName>
        <fullName>Protein S100-A1</fullName>
    </recommendedName>
    <alternativeName>
        <fullName>S-100 protein alpha chain</fullName>
    </alternativeName>
    <alternativeName>
        <fullName>S-100 protein subunit alpha</fullName>
    </alternativeName>
    <alternativeName>
        <fullName>S100 calcium-binding protein A1</fullName>
    </alternativeName>
</protein>
<comment type="function">
    <text evidence="1">Small calcium binding protein that plays important roles in several biological processes such as Ca(2+) homeostasis, chondrocyte biology and cardiomyocyte regulation. In response to an increase in intracellular Ca(2+) levels, binds calcium which triggers conformational changes. These changes allow interactions with specific target proteins and modulate their activity. Regulates a network in cardiomyocytes controlling sarcoplasmic reticulum Ca(2+) cycling and mitochondrial function through interaction with the ryanodine receptors RYR1 and RYR2, sarcoplasmic reticulum Ca(2+)-ATPase/ATP2A2 and mitochondrial F1-ATPase. Facilitates diastolic Ca(2+) dissociation and myofilament mechanics in order to improve relaxation during diastole.</text>
</comment>
<comment type="subunit">
    <text evidence="1 2 3">Dimer of either two alpha chains, or two beta chains, or one alpha and one beta chain. Also forms heterodimers with S100P (By similarity). Interacts with AGER (By similarity). Interacts with CAPZA1 (By similarity). Interacts with FKBP4. Interacts with RYR1 and RYR2. Interacts with CACYBP in a calcium-dependent manner. Interacts with PPP5C (via TPR repeats); the interaction is calcium-dependent and modulates PPP5C activity. Interacts with ATP2A2 and PLN in a Ca(2+)-dependent manner (By similarity). Interacts with mitochondrial F1-ATPase subunits ATP5F1A and ATP5F1B; these interactions increase F1-ATPase activity (By similarity).</text>
</comment>
<comment type="interaction">
    <interactant intactId="EBI-6477285">
        <id>P02639</id>
    </interactant>
    <interactant intactId="EBI-6477371">
        <id>Q9TRY0</id>
        <label>FKBP4</label>
    </interactant>
    <organismsDiffer>false</organismsDiffer>
    <experiments>2</experiments>
</comment>
<comment type="interaction">
    <interactant intactId="EBI-6477285">
        <id>P02639</id>
    </interactant>
    <interactant intactId="EBI-6477314">
        <id>Q76LV2</id>
        <label>HSP90AA1</label>
    </interactant>
    <organismsDiffer>false</organismsDiffer>
    <experiments>2</experiments>
</comment>
<comment type="interaction">
    <interactant intactId="EBI-6477285">
        <id>P02639</id>
    </interactant>
    <interactant intactId="EBI-6477341">
        <id>Q27975</id>
        <label>HSPA1A</label>
    </interactant>
    <organismsDiffer>false</organismsDiffer>
    <experiments>2</experiments>
</comment>
<comment type="interaction">
    <interactant intactId="EBI-6477285">
        <id>P02639</id>
    </interactant>
    <interactant intactId="EBI-6477155">
        <id>P26882</id>
        <label>PPID</label>
    </interactant>
    <organismsDiffer>false</organismsDiffer>
    <experiments>2</experiments>
</comment>
<comment type="interaction">
    <interactant intactId="EBI-6477285">
        <id>P02639</id>
    </interactant>
    <interactant intactId="EBI-767146">
        <id>Q9CXW3</id>
        <label>Cacybp</label>
    </interactant>
    <organismsDiffer>true</organismsDiffer>
    <experiments>4</experiments>
</comment>
<comment type="interaction">
    <interactant intactId="EBI-6477285">
        <id>P02639</id>
    </interactant>
    <interactant intactId="EBI-6477441">
        <id>P11716</id>
        <label>RYR1</label>
    </interactant>
    <organismsDiffer>true</organismsDiffer>
    <experiments>3</experiments>
</comment>
<comment type="subcellular location">
    <subcellularLocation>
        <location evidence="1">Cytoplasm</location>
    </subcellularLocation>
    <subcellularLocation>
        <location evidence="1">Sarcoplasmic reticulum</location>
    </subcellularLocation>
    <subcellularLocation>
        <location evidence="3">Mitochondrion</location>
    </subcellularLocation>
</comment>
<comment type="tissue specificity">
    <text evidence="5">Although predominant among the water-soluble brain proteins, S100 is also found in a variety of other tissues.</text>
</comment>
<comment type="PTM">
    <text evidence="1">Glutathionylated; glutathionylation increases affinity to calcium about 10-fold.</text>
</comment>
<comment type="miscellaneous">
    <text evidence="6">Able to bind zinc in vitro; the binding sites are different from the calcium binding sites. The physiological relevance of zinc binding is unclear. Physiological concentrations of potassium antagonize the binding of both divalent cations, especially affecting the high-affinity calcium-binding sites.</text>
</comment>
<comment type="similarity">
    <text evidence="8">Belongs to the S-100 family.</text>
</comment>
<keyword id="KW-0002">3D-structure</keyword>
<keyword id="KW-0106">Calcium</keyword>
<keyword id="KW-0963">Cytoplasm</keyword>
<keyword id="KW-0903">Direct protein sequencing</keyword>
<keyword id="KW-0479">Metal-binding</keyword>
<keyword id="KW-0496">Mitochondrion</keyword>
<keyword id="KW-1185">Reference proteome</keyword>
<keyword id="KW-0677">Repeat</keyword>
<keyword id="KW-0702">S-nitrosylation</keyword>
<keyword id="KW-0703">Sarcoplasmic reticulum</keyword>
<name>S10A1_BOVIN</name>